<reference key="1">
    <citation type="journal article" date="2002" name="Nature">
        <title>Sequence and analysis of chromosome 2 of Dictyostelium discoideum.</title>
        <authorList>
            <person name="Gloeckner G."/>
            <person name="Eichinger L."/>
            <person name="Szafranski K."/>
            <person name="Pachebat J.A."/>
            <person name="Bankier A.T."/>
            <person name="Dear P.H."/>
            <person name="Lehmann R."/>
            <person name="Baumgart C."/>
            <person name="Parra G."/>
            <person name="Abril J.F."/>
            <person name="Guigo R."/>
            <person name="Kumpf K."/>
            <person name="Tunggal B."/>
            <person name="Cox E.C."/>
            <person name="Quail M.A."/>
            <person name="Platzer M."/>
            <person name="Rosenthal A."/>
            <person name="Noegel A.A."/>
        </authorList>
    </citation>
    <scope>NUCLEOTIDE SEQUENCE [LARGE SCALE GENOMIC DNA]</scope>
    <source>
        <strain>AX4</strain>
    </source>
</reference>
<reference key="2">
    <citation type="journal article" date="2005" name="Nature">
        <title>The genome of the social amoeba Dictyostelium discoideum.</title>
        <authorList>
            <person name="Eichinger L."/>
            <person name="Pachebat J.A."/>
            <person name="Gloeckner G."/>
            <person name="Rajandream M.A."/>
            <person name="Sucgang R."/>
            <person name="Berriman M."/>
            <person name="Song J."/>
            <person name="Olsen R."/>
            <person name="Szafranski K."/>
            <person name="Xu Q."/>
            <person name="Tunggal B."/>
            <person name="Kummerfeld S."/>
            <person name="Madera M."/>
            <person name="Konfortov B.A."/>
            <person name="Rivero F."/>
            <person name="Bankier A.T."/>
            <person name="Lehmann R."/>
            <person name="Hamlin N."/>
            <person name="Davies R."/>
            <person name="Gaudet P."/>
            <person name="Fey P."/>
            <person name="Pilcher K."/>
            <person name="Chen G."/>
            <person name="Saunders D."/>
            <person name="Sodergren E.J."/>
            <person name="Davis P."/>
            <person name="Kerhornou A."/>
            <person name="Nie X."/>
            <person name="Hall N."/>
            <person name="Anjard C."/>
            <person name="Hemphill L."/>
            <person name="Bason N."/>
            <person name="Farbrother P."/>
            <person name="Desany B."/>
            <person name="Just E."/>
            <person name="Morio T."/>
            <person name="Rost R."/>
            <person name="Churcher C.M."/>
            <person name="Cooper J."/>
            <person name="Haydock S."/>
            <person name="van Driessche N."/>
            <person name="Cronin A."/>
            <person name="Goodhead I."/>
            <person name="Muzny D.M."/>
            <person name="Mourier T."/>
            <person name="Pain A."/>
            <person name="Lu M."/>
            <person name="Harper D."/>
            <person name="Lindsay R."/>
            <person name="Hauser H."/>
            <person name="James K.D."/>
            <person name="Quiles M."/>
            <person name="Madan Babu M."/>
            <person name="Saito T."/>
            <person name="Buchrieser C."/>
            <person name="Wardroper A."/>
            <person name="Felder M."/>
            <person name="Thangavelu M."/>
            <person name="Johnson D."/>
            <person name="Knights A."/>
            <person name="Loulseged H."/>
            <person name="Mungall K.L."/>
            <person name="Oliver K."/>
            <person name="Price C."/>
            <person name="Quail M.A."/>
            <person name="Urushihara H."/>
            <person name="Hernandez J."/>
            <person name="Rabbinowitsch E."/>
            <person name="Steffen D."/>
            <person name="Sanders M."/>
            <person name="Ma J."/>
            <person name="Kohara Y."/>
            <person name="Sharp S."/>
            <person name="Simmonds M.N."/>
            <person name="Spiegler S."/>
            <person name="Tivey A."/>
            <person name="Sugano S."/>
            <person name="White B."/>
            <person name="Walker D."/>
            <person name="Woodward J.R."/>
            <person name="Winckler T."/>
            <person name="Tanaka Y."/>
            <person name="Shaulsky G."/>
            <person name="Schleicher M."/>
            <person name="Weinstock G.M."/>
            <person name="Rosenthal A."/>
            <person name="Cox E.C."/>
            <person name="Chisholm R.L."/>
            <person name="Gibbs R.A."/>
            <person name="Loomis W.F."/>
            <person name="Platzer M."/>
            <person name="Kay R.R."/>
            <person name="Williams J.G."/>
            <person name="Dear P.H."/>
            <person name="Noegel A.A."/>
            <person name="Barrell B.G."/>
            <person name="Kuspa A."/>
        </authorList>
    </citation>
    <scope>NUCLEOTIDE SEQUENCE [LARGE SCALE GENOMIC DNA]</scope>
    <source>
        <strain>AX4</strain>
    </source>
</reference>
<keyword id="KW-0275">Fatty acid biosynthesis</keyword>
<keyword id="KW-0276">Fatty acid metabolism</keyword>
<keyword id="KW-0444">Lipid biosynthesis</keyword>
<keyword id="KW-0443">Lipid metabolism</keyword>
<keyword id="KW-0472">Membrane</keyword>
<keyword id="KW-1185">Reference proteome</keyword>
<keyword id="KW-0808">Transferase</keyword>
<keyword id="KW-0812">Transmembrane</keyword>
<keyword id="KW-1133">Transmembrane helix</keyword>
<protein>
    <recommendedName>
        <fullName evidence="4">Putative fatty acid elongase DDB_G0272012</fullName>
        <ecNumber>2.3.1.199</ecNumber>
    </recommendedName>
    <alternativeName>
        <fullName>3-keto acyl-CoA synthase DDB_G0272012</fullName>
    </alternativeName>
    <alternativeName>
        <fullName>Putative elongation of fatty acids protein DDB_G0272012</fullName>
    </alternativeName>
    <alternativeName>
        <fullName>Very-long-chain 3-oxoacyl-CoA synthase DDB_G0272012</fullName>
    </alternativeName>
</protein>
<dbReference type="EC" id="2.3.1.199"/>
<dbReference type="EMBL" id="AAFI02000007">
    <property type="protein sequence ID" value="EAL71440.1"/>
    <property type="molecule type" value="Genomic_DNA"/>
</dbReference>
<dbReference type="RefSeq" id="XP_645380.1">
    <property type="nucleotide sequence ID" value="XM_640288.1"/>
</dbReference>
<dbReference type="SMR" id="Q86JM5"/>
<dbReference type="FunCoup" id="Q86JM5">
    <property type="interactions" value="81"/>
</dbReference>
<dbReference type="PaxDb" id="44689-DDB0252836"/>
<dbReference type="EnsemblProtists" id="EAL71440">
    <property type="protein sequence ID" value="EAL71440"/>
    <property type="gene ID" value="DDB_G0272012"/>
</dbReference>
<dbReference type="GeneID" id="8618269"/>
<dbReference type="KEGG" id="ddi:DDB_G0272012"/>
<dbReference type="dictyBase" id="DDB_G0272012"/>
<dbReference type="VEuPathDB" id="AmoebaDB:DDB_G0272012"/>
<dbReference type="eggNOG" id="KOG3071">
    <property type="taxonomic scope" value="Eukaryota"/>
</dbReference>
<dbReference type="HOGENOM" id="CLU_048483_6_0_1"/>
<dbReference type="InParanoid" id="Q86JM5"/>
<dbReference type="OMA" id="WLGTMFM"/>
<dbReference type="PhylomeDB" id="Q86JM5"/>
<dbReference type="Reactome" id="R-DDI-2046105">
    <property type="pathway name" value="Linoleic acid (LA) metabolism"/>
</dbReference>
<dbReference type="Reactome" id="R-DDI-2046106">
    <property type="pathway name" value="alpha-linolenic acid (ALA) metabolism"/>
</dbReference>
<dbReference type="Reactome" id="R-DDI-75876">
    <property type="pathway name" value="Synthesis of very long-chain fatty acyl-CoAs"/>
</dbReference>
<dbReference type="PRO" id="PR:Q86JM5"/>
<dbReference type="Proteomes" id="UP000002195">
    <property type="component" value="Chromosome 2"/>
</dbReference>
<dbReference type="GO" id="GO:0005789">
    <property type="term" value="C:endoplasmic reticulum membrane"/>
    <property type="evidence" value="ECO:0000250"/>
    <property type="project" value="UniProtKB"/>
</dbReference>
<dbReference type="GO" id="GO:0009922">
    <property type="term" value="F:fatty acid elongase activity"/>
    <property type="evidence" value="ECO:0000318"/>
    <property type="project" value="GO_Central"/>
</dbReference>
<dbReference type="GO" id="GO:0034625">
    <property type="term" value="P:fatty acid elongation, monounsaturated fatty acid"/>
    <property type="evidence" value="ECO:0000318"/>
    <property type="project" value="GO_Central"/>
</dbReference>
<dbReference type="GO" id="GO:0034626">
    <property type="term" value="P:fatty acid elongation, polyunsaturated fatty acid"/>
    <property type="evidence" value="ECO:0000318"/>
    <property type="project" value="GO_Central"/>
</dbReference>
<dbReference type="GO" id="GO:0019367">
    <property type="term" value="P:fatty acid elongation, saturated fatty acid"/>
    <property type="evidence" value="ECO:0000318"/>
    <property type="project" value="GO_Central"/>
</dbReference>
<dbReference type="GO" id="GO:0030148">
    <property type="term" value="P:sphingolipid biosynthetic process"/>
    <property type="evidence" value="ECO:0000318"/>
    <property type="project" value="GO_Central"/>
</dbReference>
<dbReference type="GO" id="GO:0042761">
    <property type="term" value="P:very long-chain fatty acid biosynthetic process"/>
    <property type="evidence" value="ECO:0000318"/>
    <property type="project" value="GO_Central"/>
</dbReference>
<dbReference type="InterPro" id="IPR030457">
    <property type="entry name" value="ELO_CS"/>
</dbReference>
<dbReference type="InterPro" id="IPR002076">
    <property type="entry name" value="ELO_fam"/>
</dbReference>
<dbReference type="PANTHER" id="PTHR11157:SF134">
    <property type="entry name" value="ELONGATION OF FATTY ACIDS PROTEIN 1-RELATED"/>
    <property type="match status" value="1"/>
</dbReference>
<dbReference type="PANTHER" id="PTHR11157">
    <property type="entry name" value="FATTY ACID ACYL TRANSFERASE-RELATED"/>
    <property type="match status" value="1"/>
</dbReference>
<dbReference type="Pfam" id="PF01151">
    <property type="entry name" value="ELO"/>
    <property type="match status" value="1"/>
</dbReference>
<dbReference type="PROSITE" id="PS01188">
    <property type="entry name" value="ELO"/>
    <property type="match status" value="1"/>
</dbReference>
<sequence>METIQSVITEWSDSKSWDHLFQHNFKDSNWSELFDPVNFKFKFGTTPFSQFQILPSVISLYLVIIFSIKFLMRNRKPFSLKYVSILHNAILCIWSLVMCVGILYEVIKRITAEGPLFTVCETVSGFDKGPAYYWSYIFYISKFYELLDTVIIVLKKKPLIFLHVYHHCIVVWLCWYFMYSGWNLQLWVVFLNTFVHVFMYYFYFQTGRGKTVWWKKYITMIQIIQFICLGIAGLLHSAAINLNSSPCFTHYPAFISAYLINFSFLFLFSQFFVKSYSNKPTSSSSTTTPTKTKKID</sequence>
<accession>Q86JM5</accession>
<accession>Q55A86</accession>
<proteinExistence type="inferred from homology"/>
<feature type="chain" id="PRO_0000393466" description="Putative fatty acid elongase DDB_G0272012">
    <location>
        <begin position="1"/>
        <end position="296"/>
    </location>
</feature>
<feature type="transmembrane region" description="Helical" evidence="2">
    <location>
        <begin position="51"/>
        <end position="71"/>
    </location>
</feature>
<feature type="transmembrane region" description="Helical" evidence="2">
    <location>
        <begin position="83"/>
        <end position="103"/>
    </location>
</feature>
<feature type="transmembrane region" description="Helical" evidence="2">
    <location>
        <begin position="134"/>
        <end position="154"/>
    </location>
</feature>
<feature type="transmembrane region" description="Helical" evidence="2">
    <location>
        <begin position="159"/>
        <end position="179"/>
    </location>
</feature>
<feature type="transmembrane region" description="Helical" evidence="2">
    <location>
        <begin position="184"/>
        <end position="204"/>
    </location>
</feature>
<feature type="transmembrane region" description="Helical" evidence="2">
    <location>
        <begin position="220"/>
        <end position="240"/>
    </location>
</feature>
<feature type="transmembrane region" description="Helical" evidence="2">
    <location>
        <begin position="253"/>
        <end position="273"/>
    </location>
</feature>
<feature type="region of interest" description="Disordered" evidence="3">
    <location>
        <begin position="277"/>
        <end position="296"/>
    </location>
</feature>
<feature type="compositionally biased region" description="Low complexity" evidence="3">
    <location>
        <begin position="277"/>
        <end position="290"/>
    </location>
</feature>
<name>Y2012_DICDI</name>
<organism>
    <name type="scientific">Dictyostelium discoideum</name>
    <name type="common">Social amoeba</name>
    <dbReference type="NCBI Taxonomy" id="44689"/>
    <lineage>
        <taxon>Eukaryota</taxon>
        <taxon>Amoebozoa</taxon>
        <taxon>Evosea</taxon>
        <taxon>Eumycetozoa</taxon>
        <taxon>Dictyostelia</taxon>
        <taxon>Dictyosteliales</taxon>
        <taxon>Dictyosteliaceae</taxon>
        <taxon>Dictyostelium</taxon>
    </lineage>
</organism>
<comment type="function">
    <text evidence="1">Could be implicated in synthesis of very long chain fatty acids.</text>
</comment>
<comment type="catalytic activity">
    <reaction>
        <text>a very-long-chain acyl-CoA + malonyl-CoA + H(+) = a very-long-chain 3-oxoacyl-CoA + CO2 + CoA</text>
        <dbReference type="Rhea" id="RHEA:32727"/>
        <dbReference type="ChEBI" id="CHEBI:15378"/>
        <dbReference type="ChEBI" id="CHEBI:16526"/>
        <dbReference type="ChEBI" id="CHEBI:57287"/>
        <dbReference type="ChEBI" id="CHEBI:57384"/>
        <dbReference type="ChEBI" id="CHEBI:90725"/>
        <dbReference type="ChEBI" id="CHEBI:90736"/>
        <dbReference type="EC" id="2.3.1.199"/>
    </reaction>
</comment>
<comment type="subcellular location">
    <subcellularLocation>
        <location evidence="4">Membrane</location>
        <topology evidence="4">Multi-pass membrane protein</topology>
    </subcellularLocation>
</comment>
<comment type="similarity">
    <text evidence="4">Belongs to the ELO family.</text>
</comment>
<gene>
    <name type="ORF">DDB_G0272012</name>
</gene>
<evidence type="ECO:0000250" key="1"/>
<evidence type="ECO:0000255" key="2"/>
<evidence type="ECO:0000256" key="3">
    <source>
        <dbReference type="SAM" id="MobiDB-lite"/>
    </source>
</evidence>
<evidence type="ECO:0000305" key="4"/>